<proteinExistence type="inferred from homology"/>
<accession>C0PXU6</accession>
<keyword id="KW-0067">ATP-binding</keyword>
<keyword id="KW-0963">Cytoplasm</keyword>
<keyword id="KW-0418">Kinase</keyword>
<keyword id="KW-0547">Nucleotide-binding</keyword>
<keyword id="KW-0808">Transferase</keyword>
<dbReference type="EC" id="2.7.4.25" evidence="1"/>
<dbReference type="EMBL" id="CP000857">
    <property type="protein sequence ID" value="ACN45146.1"/>
    <property type="molecule type" value="Genomic_DNA"/>
</dbReference>
<dbReference type="RefSeq" id="WP_000125007.1">
    <property type="nucleotide sequence ID" value="NC_012125.1"/>
</dbReference>
<dbReference type="SMR" id="C0PXU6"/>
<dbReference type="KEGG" id="sei:SPC_0979"/>
<dbReference type="HOGENOM" id="CLU_079959_0_2_6"/>
<dbReference type="Proteomes" id="UP000001599">
    <property type="component" value="Chromosome"/>
</dbReference>
<dbReference type="GO" id="GO:0005829">
    <property type="term" value="C:cytosol"/>
    <property type="evidence" value="ECO:0007669"/>
    <property type="project" value="TreeGrafter"/>
</dbReference>
<dbReference type="GO" id="GO:0005524">
    <property type="term" value="F:ATP binding"/>
    <property type="evidence" value="ECO:0007669"/>
    <property type="project" value="UniProtKB-UniRule"/>
</dbReference>
<dbReference type="GO" id="GO:0036430">
    <property type="term" value="F:CMP kinase activity"/>
    <property type="evidence" value="ECO:0007669"/>
    <property type="project" value="RHEA"/>
</dbReference>
<dbReference type="GO" id="GO:0036431">
    <property type="term" value="F:dCMP kinase activity"/>
    <property type="evidence" value="ECO:0007669"/>
    <property type="project" value="RHEA"/>
</dbReference>
<dbReference type="GO" id="GO:0015949">
    <property type="term" value="P:nucleobase-containing small molecule interconversion"/>
    <property type="evidence" value="ECO:0007669"/>
    <property type="project" value="TreeGrafter"/>
</dbReference>
<dbReference type="GO" id="GO:0006220">
    <property type="term" value="P:pyrimidine nucleotide metabolic process"/>
    <property type="evidence" value="ECO:0007669"/>
    <property type="project" value="UniProtKB-UniRule"/>
</dbReference>
<dbReference type="CDD" id="cd02020">
    <property type="entry name" value="CMPK"/>
    <property type="match status" value="1"/>
</dbReference>
<dbReference type="FunFam" id="3.40.50.300:FF:000262">
    <property type="entry name" value="Cytidylate kinase"/>
    <property type="match status" value="1"/>
</dbReference>
<dbReference type="Gene3D" id="3.40.50.300">
    <property type="entry name" value="P-loop containing nucleotide triphosphate hydrolases"/>
    <property type="match status" value="1"/>
</dbReference>
<dbReference type="HAMAP" id="MF_00238">
    <property type="entry name" value="Cytidyl_kinase_type1"/>
    <property type="match status" value="1"/>
</dbReference>
<dbReference type="InterPro" id="IPR003136">
    <property type="entry name" value="Cytidylate_kin"/>
</dbReference>
<dbReference type="InterPro" id="IPR011994">
    <property type="entry name" value="Cytidylate_kinase_dom"/>
</dbReference>
<dbReference type="InterPro" id="IPR027417">
    <property type="entry name" value="P-loop_NTPase"/>
</dbReference>
<dbReference type="NCBIfam" id="TIGR00017">
    <property type="entry name" value="cmk"/>
    <property type="match status" value="1"/>
</dbReference>
<dbReference type="PANTHER" id="PTHR21299:SF2">
    <property type="entry name" value="CYTIDYLATE KINASE"/>
    <property type="match status" value="1"/>
</dbReference>
<dbReference type="PANTHER" id="PTHR21299">
    <property type="entry name" value="CYTIDYLATE KINASE/PANTOATE-BETA-ALANINE LIGASE"/>
    <property type="match status" value="1"/>
</dbReference>
<dbReference type="Pfam" id="PF02224">
    <property type="entry name" value="Cytidylate_kin"/>
    <property type="match status" value="1"/>
</dbReference>
<dbReference type="SUPFAM" id="SSF52540">
    <property type="entry name" value="P-loop containing nucleoside triphosphate hydrolases"/>
    <property type="match status" value="1"/>
</dbReference>
<reference key="1">
    <citation type="journal article" date="2009" name="PLoS ONE">
        <title>Salmonella paratyphi C: genetic divergence from Salmonella choleraesuis and pathogenic convergence with Salmonella typhi.</title>
        <authorList>
            <person name="Liu W.-Q."/>
            <person name="Feng Y."/>
            <person name="Wang Y."/>
            <person name="Zou Q.-H."/>
            <person name="Chen F."/>
            <person name="Guo J.-T."/>
            <person name="Peng Y.-H."/>
            <person name="Jin Y."/>
            <person name="Li Y.-G."/>
            <person name="Hu S.-N."/>
            <person name="Johnston R.N."/>
            <person name="Liu G.-R."/>
            <person name="Liu S.-L."/>
        </authorList>
    </citation>
    <scope>NUCLEOTIDE SEQUENCE [LARGE SCALE GENOMIC DNA]</scope>
    <source>
        <strain>RKS4594</strain>
    </source>
</reference>
<evidence type="ECO:0000255" key="1">
    <source>
        <dbReference type="HAMAP-Rule" id="MF_00238"/>
    </source>
</evidence>
<organism>
    <name type="scientific">Salmonella paratyphi C (strain RKS4594)</name>
    <dbReference type="NCBI Taxonomy" id="476213"/>
    <lineage>
        <taxon>Bacteria</taxon>
        <taxon>Pseudomonadati</taxon>
        <taxon>Pseudomonadota</taxon>
        <taxon>Gammaproteobacteria</taxon>
        <taxon>Enterobacterales</taxon>
        <taxon>Enterobacteriaceae</taxon>
        <taxon>Salmonella</taxon>
    </lineage>
</organism>
<protein>
    <recommendedName>
        <fullName evidence="1">Cytidylate kinase</fullName>
        <shortName evidence="1">CK</shortName>
        <ecNumber evidence="1">2.7.4.25</ecNumber>
    </recommendedName>
    <alternativeName>
        <fullName evidence="1">Cytidine monophosphate kinase</fullName>
        <shortName evidence="1">CMP kinase</shortName>
    </alternativeName>
</protein>
<gene>
    <name evidence="1" type="primary">cmk</name>
    <name type="ordered locus">SPC_0979</name>
</gene>
<name>KCY_SALPC</name>
<feature type="chain" id="PRO_1000125297" description="Cytidylate kinase">
    <location>
        <begin position="1"/>
        <end position="227"/>
    </location>
</feature>
<feature type="binding site" evidence="1">
    <location>
        <begin position="12"/>
        <end position="20"/>
    </location>
    <ligand>
        <name>ATP</name>
        <dbReference type="ChEBI" id="CHEBI:30616"/>
    </ligand>
</feature>
<comment type="catalytic activity">
    <reaction evidence="1">
        <text>CMP + ATP = CDP + ADP</text>
        <dbReference type="Rhea" id="RHEA:11600"/>
        <dbReference type="ChEBI" id="CHEBI:30616"/>
        <dbReference type="ChEBI" id="CHEBI:58069"/>
        <dbReference type="ChEBI" id="CHEBI:60377"/>
        <dbReference type="ChEBI" id="CHEBI:456216"/>
        <dbReference type="EC" id="2.7.4.25"/>
    </reaction>
</comment>
<comment type="catalytic activity">
    <reaction evidence="1">
        <text>dCMP + ATP = dCDP + ADP</text>
        <dbReference type="Rhea" id="RHEA:25094"/>
        <dbReference type="ChEBI" id="CHEBI:30616"/>
        <dbReference type="ChEBI" id="CHEBI:57566"/>
        <dbReference type="ChEBI" id="CHEBI:58593"/>
        <dbReference type="ChEBI" id="CHEBI:456216"/>
        <dbReference type="EC" id="2.7.4.25"/>
    </reaction>
</comment>
<comment type="subcellular location">
    <subcellularLocation>
        <location evidence="1">Cytoplasm</location>
    </subcellularLocation>
</comment>
<comment type="similarity">
    <text evidence="1">Belongs to the cytidylate kinase family. Type 1 subfamily.</text>
</comment>
<sequence>MTAIAPVITIDGPSGAGKGTLCKAMAEALQWHLLDSGAIYRVLALAALHHHVDLASEDALVPLASHLDVRFVSTDGNLEVILEGEDVSGEIRTQEVANAASQVAAFPRVREALLRRQRAFREAPGLIADGRDMGTVVFPDAPVKIFLDASSEERAHRRMLQLQENGFSVNFERLLAEIKERDDRDRNRAVAPLVPAADALVLDSTRLSIEQVIEKALQYARQKLALA</sequence>